<dbReference type="EMBL" id="CP000097">
    <property type="protein sequence ID" value="ABB26248.1"/>
    <property type="molecule type" value="Genomic_DNA"/>
</dbReference>
<dbReference type="SMR" id="Q3AXF2"/>
<dbReference type="STRING" id="316279.Syncc9902_1284"/>
<dbReference type="KEGG" id="sye:Syncc9902_1284"/>
<dbReference type="eggNOG" id="COG0792">
    <property type="taxonomic scope" value="Bacteria"/>
</dbReference>
<dbReference type="HOGENOM" id="CLU_115353_0_3_3"/>
<dbReference type="OrthoDB" id="9802516at2"/>
<dbReference type="Proteomes" id="UP000002712">
    <property type="component" value="Chromosome"/>
</dbReference>
<dbReference type="GO" id="GO:0003676">
    <property type="term" value="F:nucleic acid binding"/>
    <property type="evidence" value="ECO:0007669"/>
    <property type="project" value="InterPro"/>
</dbReference>
<dbReference type="Gene3D" id="3.40.1350.10">
    <property type="match status" value="1"/>
</dbReference>
<dbReference type="HAMAP" id="MF_00048">
    <property type="entry name" value="UPF0102"/>
    <property type="match status" value="1"/>
</dbReference>
<dbReference type="InterPro" id="IPR011335">
    <property type="entry name" value="Restrct_endonuc-II-like"/>
</dbReference>
<dbReference type="InterPro" id="IPR011856">
    <property type="entry name" value="tRNA_endonuc-like_dom_sf"/>
</dbReference>
<dbReference type="InterPro" id="IPR003509">
    <property type="entry name" value="UPF0102_YraN-like"/>
</dbReference>
<dbReference type="NCBIfam" id="NF011281">
    <property type="entry name" value="PRK14689.1"/>
    <property type="match status" value="1"/>
</dbReference>
<dbReference type="PANTHER" id="PTHR34039">
    <property type="entry name" value="UPF0102 PROTEIN YRAN"/>
    <property type="match status" value="1"/>
</dbReference>
<dbReference type="PANTHER" id="PTHR34039:SF1">
    <property type="entry name" value="UPF0102 PROTEIN YRAN"/>
    <property type="match status" value="1"/>
</dbReference>
<dbReference type="Pfam" id="PF02021">
    <property type="entry name" value="UPF0102"/>
    <property type="match status" value="1"/>
</dbReference>
<dbReference type="SUPFAM" id="SSF52980">
    <property type="entry name" value="Restriction endonuclease-like"/>
    <property type="match status" value="1"/>
</dbReference>
<gene>
    <name type="ordered locus">Syncc9902_1284</name>
</gene>
<accession>Q3AXF2</accession>
<sequence length="121" mass="14070">MTKQQIQGDRAEEIAFQLLQRKGWVLLDRNWSCRWGELDLVLQKDQRLLVVEVKGRTAQRHDRGGLDAFHSHKRRRLARAINCWRSHHPDAGHQLLQVVLALVNLSGSATRVRWLAIHQLS</sequence>
<name>Y1284_SYNS9</name>
<keyword id="KW-1185">Reference proteome</keyword>
<comment type="similarity">
    <text evidence="1">Belongs to the UPF0102 family.</text>
</comment>
<reference key="1">
    <citation type="submission" date="2005-08" db="EMBL/GenBank/DDBJ databases">
        <title>Complete sequence of Synechococcus sp. CC9902.</title>
        <authorList>
            <person name="Copeland A."/>
            <person name="Lucas S."/>
            <person name="Lapidus A."/>
            <person name="Barry K."/>
            <person name="Detter J.C."/>
            <person name="Glavina T."/>
            <person name="Hammon N."/>
            <person name="Israni S."/>
            <person name="Pitluck S."/>
            <person name="Martinez M."/>
            <person name="Schmutz J."/>
            <person name="Larimer F."/>
            <person name="Land M."/>
            <person name="Kyrpides N."/>
            <person name="Ivanova N."/>
            <person name="Richardson P."/>
        </authorList>
    </citation>
    <scope>NUCLEOTIDE SEQUENCE [LARGE SCALE GENOMIC DNA]</scope>
    <source>
        <strain>CC9902</strain>
    </source>
</reference>
<organism>
    <name type="scientific">Synechococcus sp. (strain CC9902)</name>
    <dbReference type="NCBI Taxonomy" id="316279"/>
    <lineage>
        <taxon>Bacteria</taxon>
        <taxon>Bacillati</taxon>
        <taxon>Cyanobacteriota</taxon>
        <taxon>Cyanophyceae</taxon>
        <taxon>Synechococcales</taxon>
        <taxon>Synechococcaceae</taxon>
        <taxon>Synechococcus</taxon>
    </lineage>
</organism>
<proteinExistence type="inferred from homology"/>
<feature type="chain" id="PRO_1000009272" description="UPF0102 protein Syncc9902_1284">
    <location>
        <begin position="1"/>
        <end position="121"/>
    </location>
</feature>
<protein>
    <recommendedName>
        <fullName evidence="1">UPF0102 protein Syncc9902_1284</fullName>
    </recommendedName>
</protein>
<evidence type="ECO:0000255" key="1">
    <source>
        <dbReference type="HAMAP-Rule" id="MF_00048"/>
    </source>
</evidence>